<sequence>MNNLFVLIKREFILQHRINNIIKYIVIFFLFYIISTVLINSEKDINKFGLIFSVICLLISLISFSTIIFKSDVEDGSLELLLSIVSCEKIIFAKFVAIFICTTVGLIFVLPVIYVFFDQILLEIALFFISVWMIFVLSSSLVVLSGSVQCYFKKNTNFVGTFIMPLLIPNIIMTGLILQDNNLQLIFIMIGINLIFLPVSFCLSAYLIKNIYNIT</sequence>
<reference key="1">
    <citation type="journal article" date="1998" name="Nature">
        <title>The genome sequence of Rickettsia prowazekii and the origin of mitochondria.</title>
        <authorList>
            <person name="Andersson S.G.E."/>
            <person name="Zomorodipour A."/>
            <person name="Andersson J.O."/>
            <person name="Sicheritz-Ponten T."/>
            <person name="Alsmark U.C.M."/>
            <person name="Podowski R.M."/>
            <person name="Naeslund A.K."/>
            <person name="Eriksson A.-S."/>
            <person name="Winkler H.H."/>
            <person name="Kurland C.G."/>
        </authorList>
    </citation>
    <scope>NUCLEOTIDE SEQUENCE [LARGE SCALE GENOMIC DNA]</scope>
    <source>
        <strain>Madrid E</strain>
    </source>
</reference>
<gene>
    <name type="ordered locus">RP268</name>
</gene>
<name>Y268_RICPR</name>
<proteinExistence type="inferred from homology"/>
<comment type="subcellular location">
    <subcellularLocation>
        <location evidence="2">Cell membrane</location>
        <topology evidence="2">Multi-pass membrane protein</topology>
    </subcellularLocation>
</comment>
<comment type="similarity">
    <text evidence="2">Belongs to the CcmB/CycW/HelB family.</text>
</comment>
<feature type="chain" id="PRO_0000201548" description="Uncharacterized protein RP268">
    <location>
        <begin position="1"/>
        <end position="215"/>
    </location>
</feature>
<feature type="transmembrane region" description="Helical" evidence="1">
    <location>
        <begin position="21"/>
        <end position="40"/>
    </location>
</feature>
<feature type="transmembrane region" description="Helical" evidence="1">
    <location>
        <begin position="50"/>
        <end position="69"/>
    </location>
</feature>
<feature type="transmembrane region" description="Helical" evidence="1">
    <location>
        <begin position="95"/>
        <end position="117"/>
    </location>
</feature>
<feature type="transmembrane region" description="Helical" evidence="1">
    <location>
        <begin position="122"/>
        <end position="144"/>
    </location>
</feature>
<feature type="transmembrane region" description="Helical" evidence="1">
    <location>
        <begin position="157"/>
        <end position="179"/>
    </location>
</feature>
<feature type="transmembrane region" description="Helical" evidence="1">
    <location>
        <begin position="185"/>
        <end position="207"/>
    </location>
</feature>
<dbReference type="EMBL" id="AJ235271">
    <property type="protein sequence ID" value="CAA14730.1"/>
    <property type="molecule type" value="Genomic_DNA"/>
</dbReference>
<dbReference type="PIR" id="H71681">
    <property type="entry name" value="H71681"/>
</dbReference>
<dbReference type="RefSeq" id="NP_220653.1">
    <property type="nucleotide sequence ID" value="NC_000963.1"/>
</dbReference>
<dbReference type="RefSeq" id="WP_004597336.1">
    <property type="nucleotide sequence ID" value="NC_000963.1"/>
</dbReference>
<dbReference type="SMR" id="Q9ZDQ7"/>
<dbReference type="STRING" id="272947.gene:17555349"/>
<dbReference type="EnsemblBacteria" id="CAA14730">
    <property type="protein sequence ID" value="CAA14730"/>
    <property type="gene ID" value="CAA14730"/>
</dbReference>
<dbReference type="KEGG" id="rpr:RP268"/>
<dbReference type="PATRIC" id="fig|272947.5.peg.275"/>
<dbReference type="eggNOG" id="ENOG50314HB">
    <property type="taxonomic scope" value="Bacteria"/>
</dbReference>
<dbReference type="HOGENOM" id="CLU_1282407_0_0_5"/>
<dbReference type="OrthoDB" id="7161170at2"/>
<dbReference type="Proteomes" id="UP000002480">
    <property type="component" value="Chromosome"/>
</dbReference>
<dbReference type="GO" id="GO:0005886">
    <property type="term" value="C:plasma membrane"/>
    <property type="evidence" value="ECO:0007669"/>
    <property type="project" value="UniProtKB-SubCell"/>
</dbReference>
<dbReference type="GO" id="GO:0015232">
    <property type="term" value="F:heme transmembrane transporter activity"/>
    <property type="evidence" value="ECO:0007669"/>
    <property type="project" value="InterPro"/>
</dbReference>
<dbReference type="GO" id="GO:0017004">
    <property type="term" value="P:cytochrome complex assembly"/>
    <property type="evidence" value="ECO:0007669"/>
    <property type="project" value="InterPro"/>
</dbReference>
<dbReference type="InterPro" id="IPR003544">
    <property type="entry name" value="Cyt_c_biogenesis_CcmB"/>
</dbReference>
<dbReference type="Pfam" id="PF03379">
    <property type="entry name" value="CcmB"/>
    <property type="match status" value="1"/>
</dbReference>
<organism>
    <name type="scientific">Rickettsia prowazekii (strain Madrid E)</name>
    <dbReference type="NCBI Taxonomy" id="272947"/>
    <lineage>
        <taxon>Bacteria</taxon>
        <taxon>Pseudomonadati</taxon>
        <taxon>Pseudomonadota</taxon>
        <taxon>Alphaproteobacteria</taxon>
        <taxon>Rickettsiales</taxon>
        <taxon>Rickettsiaceae</taxon>
        <taxon>Rickettsieae</taxon>
        <taxon>Rickettsia</taxon>
        <taxon>typhus group</taxon>
    </lineage>
</organism>
<protein>
    <recommendedName>
        <fullName>Uncharacterized protein RP268</fullName>
    </recommendedName>
</protein>
<evidence type="ECO:0000255" key="1"/>
<evidence type="ECO:0000305" key="2"/>
<keyword id="KW-1003">Cell membrane</keyword>
<keyword id="KW-0472">Membrane</keyword>
<keyword id="KW-1185">Reference proteome</keyword>
<keyword id="KW-0812">Transmembrane</keyword>
<keyword id="KW-1133">Transmembrane helix</keyword>
<accession>Q9ZDQ7</accession>